<keyword id="KW-1185">Reference proteome</keyword>
<sequence>MSDFIFCYDSFVKGYLCEYIKEVNKKYRFYLTKKSYIKIIFKYISDLKYLVVNFNDSIKFMKFIVKKDIHCDLKYHGHYKCQSLKNYATYFKYIVQNKCLENIRVFFGRFIPVVKLQSGISRVIDESPKKLFGNIVIDIEIIKTIFKYGPLSETESIIEYMLQTTPNLTDEFANDIIAIYKRKIIKYLDTNNDDNTHINEKFHFPNFLIMAYKNDDVYLFNFINDDFFQIVDDLNNIDKTKLNKKQLRTLELFNYKYKLNNQSINSIILPNLIRNDYVKLVKYFCPKIFKELITGFGNFSLLNELILENILIYNNLEYMEIICECIEHTNPELVNKLLPSSRSVEMAQLLIDHGADYEAFYYSNTFILSNISVKKHVAKLVREIL</sequence>
<organism>
    <name type="scientific">Acanthamoeba polyphaga mimivirus</name>
    <name type="common">APMV</name>
    <dbReference type="NCBI Taxonomy" id="212035"/>
    <lineage>
        <taxon>Viruses</taxon>
        <taxon>Varidnaviria</taxon>
        <taxon>Bamfordvirae</taxon>
        <taxon>Nucleocytoviricota</taxon>
        <taxon>Megaviricetes</taxon>
        <taxon>Imitervirales</taxon>
        <taxon>Mimiviridae</taxon>
        <taxon>Megamimivirinae</taxon>
        <taxon>Mimivirus</taxon>
        <taxon>Mimivirus bradfordmassiliense</taxon>
    </lineage>
</organism>
<feature type="chain" id="PRO_0000071231" description="Uncharacterized protein L175">
    <location>
        <begin position="1"/>
        <end position="385"/>
    </location>
</feature>
<organismHost>
    <name type="scientific">Acanthamoeba polyphaga</name>
    <name type="common">Amoeba</name>
    <dbReference type="NCBI Taxonomy" id="5757"/>
</organismHost>
<proteinExistence type="inferred from homology"/>
<evidence type="ECO:0000305" key="1"/>
<reference key="1">
    <citation type="journal article" date="2004" name="Science">
        <title>The 1.2-megabase genome sequence of Mimivirus.</title>
        <authorList>
            <person name="Raoult D."/>
            <person name="Audic S."/>
            <person name="Robert C."/>
            <person name="Abergel C."/>
            <person name="Renesto P."/>
            <person name="Ogata H."/>
            <person name="La Scola B."/>
            <person name="Susan M."/>
            <person name="Claverie J.-M."/>
        </authorList>
    </citation>
    <scope>NUCLEOTIDE SEQUENCE [LARGE SCALE GENOMIC DNA]</scope>
    <source>
        <strain>Rowbotham-Bradford</strain>
    </source>
</reference>
<comment type="similarity">
    <text evidence="1">Belongs to the mimivirus L17x/L18x family.</text>
</comment>
<name>YL175_MIMIV</name>
<protein>
    <recommendedName>
        <fullName>Uncharacterized protein L175</fullName>
    </recommendedName>
</protein>
<dbReference type="EMBL" id="AY653733">
    <property type="protein sequence ID" value="AAV50449.1"/>
    <property type="molecule type" value="Genomic_DNA"/>
</dbReference>
<dbReference type="Proteomes" id="UP000001134">
    <property type="component" value="Genome"/>
</dbReference>
<accession>Q5UPP0</accession>
<gene>
    <name type="ordered locus">MIMI_L175</name>
</gene>